<keyword id="KW-0963">Cytoplasm</keyword>
<keyword id="KW-0251">Elongation factor</keyword>
<keyword id="KW-0342">GTP-binding</keyword>
<keyword id="KW-0378">Hydrolase</keyword>
<keyword id="KW-0460">Magnesium</keyword>
<keyword id="KW-0479">Metal-binding</keyword>
<keyword id="KW-0547">Nucleotide-binding</keyword>
<keyword id="KW-0648">Protein biosynthesis</keyword>
<keyword id="KW-1185">Reference proteome</keyword>
<accession>P74227</accession>
<comment type="function">
    <text evidence="2">GTP hydrolase that promotes the GTP-dependent binding of aminoacyl-tRNA to the A-site of ribosomes during protein biosynthesis.</text>
</comment>
<comment type="catalytic activity">
    <reaction evidence="2">
        <text>GTP + H2O = GDP + phosphate + H(+)</text>
        <dbReference type="Rhea" id="RHEA:19669"/>
        <dbReference type="ChEBI" id="CHEBI:15377"/>
        <dbReference type="ChEBI" id="CHEBI:15378"/>
        <dbReference type="ChEBI" id="CHEBI:37565"/>
        <dbReference type="ChEBI" id="CHEBI:43474"/>
        <dbReference type="ChEBI" id="CHEBI:58189"/>
        <dbReference type="EC" id="3.6.5.3"/>
    </reaction>
    <physiologicalReaction direction="left-to-right" evidence="2">
        <dbReference type="Rhea" id="RHEA:19670"/>
    </physiologicalReaction>
</comment>
<comment type="subunit">
    <text evidence="2">Monomer.</text>
</comment>
<comment type="interaction">
    <interactant intactId="EBI-862703">
        <id>P74227</id>
    </interactant>
    <interactant intactId="EBI-862916">
        <id>P52231</id>
        <label>trxA</label>
    </interactant>
    <organismsDiffer>false</organismsDiffer>
    <experiments>5</experiments>
</comment>
<comment type="subcellular location">
    <subcellularLocation>
        <location evidence="2">Cytoplasm</location>
    </subcellularLocation>
</comment>
<comment type="similarity">
    <text evidence="2">Belongs to the TRAFAC class translation factor GTPase superfamily. Classic translation factor GTPase family. EF-Tu/EF-1A subfamily.</text>
</comment>
<organism>
    <name type="scientific">Synechocystis sp. (strain ATCC 27184 / PCC 6803 / Kazusa)</name>
    <dbReference type="NCBI Taxonomy" id="1111708"/>
    <lineage>
        <taxon>Bacteria</taxon>
        <taxon>Bacillati</taxon>
        <taxon>Cyanobacteriota</taxon>
        <taxon>Cyanophyceae</taxon>
        <taxon>Synechococcales</taxon>
        <taxon>Merismopediaceae</taxon>
        <taxon>Synechocystis</taxon>
    </lineage>
</organism>
<gene>
    <name evidence="2" type="primary">tuf</name>
    <name type="synonym">tufA</name>
    <name type="ordered locus">sll1099</name>
</gene>
<proteinExistence type="evidence at protein level"/>
<sequence>MARAKFERTKDHVNIGTIGHVDHGKTTLTAAITMTLAELGGAKARKYEDIDAAPEEKARGITINTAHVEYETDSRHYAHVDCPGHADYVKNMITGAAQMDGAILVVSAADGPMPQTREHILLAKQVGVPKLVVFLNKKDMVDDEELLELVELEVRELLSDYDFPGDDIPIVAGSALKAIEGEKEYKDAILELMKAVDDYIDTPEREVDKPFLMAVEDVFSITGRGTVATGRIERGKVKVGEEISIVGIKDTRKATVTGVEMFQKTLEEGMAGDNVGLLLRGIQKEDIERGMVLAKPGSITPHTEFEGEVYVLKKEEGGRHTPFFANYRPQFYVRTTDVTGTIKSYTADDGSAVEMVMPGDRIKMTVELINPIAIEQGMRFAIREGGRTIGAGVVSKILK</sequence>
<dbReference type="EC" id="3.6.5.3" evidence="2"/>
<dbReference type="EMBL" id="BA000022">
    <property type="protein sequence ID" value="BAA18321.1"/>
    <property type="molecule type" value="Genomic_DNA"/>
</dbReference>
<dbReference type="PIR" id="S75862">
    <property type="entry name" value="S75862"/>
</dbReference>
<dbReference type="SMR" id="P74227"/>
<dbReference type="FunCoup" id="P74227">
    <property type="interactions" value="504"/>
</dbReference>
<dbReference type="IntAct" id="P74227">
    <property type="interactions" value="4"/>
</dbReference>
<dbReference type="STRING" id="1148.gene:10499197"/>
<dbReference type="PaxDb" id="1148-1653407"/>
<dbReference type="EnsemblBacteria" id="BAA18321">
    <property type="protein sequence ID" value="BAA18321"/>
    <property type="gene ID" value="BAA18321"/>
</dbReference>
<dbReference type="KEGG" id="syn:sll1099"/>
<dbReference type="eggNOG" id="COG0050">
    <property type="taxonomic scope" value="Bacteria"/>
</dbReference>
<dbReference type="InParanoid" id="P74227"/>
<dbReference type="PhylomeDB" id="P74227"/>
<dbReference type="Proteomes" id="UP000001425">
    <property type="component" value="Chromosome"/>
</dbReference>
<dbReference type="GO" id="GO:0005737">
    <property type="term" value="C:cytoplasm"/>
    <property type="evidence" value="ECO:0007669"/>
    <property type="project" value="UniProtKB-SubCell"/>
</dbReference>
<dbReference type="GO" id="GO:0005525">
    <property type="term" value="F:GTP binding"/>
    <property type="evidence" value="ECO:0007669"/>
    <property type="project" value="UniProtKB-UniRule"/>
</dbReference>
<dbReference type="GO" id="GO:0003924">
    <property type="term" value="F:GTPase activity"/>
    <property type="evidence" value="ECO:0007669"/>
    <property type="project" value="InterPro"/>
</dbReference>
<dbReference type="GO" id="GO:0003746">
    <property type="term" value="F:translation elongation factor activity"/>
    <property type="evidence" value="ECO:0000318"/>
    <property type="project" value="GO_Central"/>
</dbReference>
<dbReference type="GO" id="GO:0006414">
    <property type="term" value="P:translational elongation"/>
    <property type="evidence" value="ECO:0000318"/>
    <property type="project" value="GO_Central"/>
</dbReference>
<dbReference type="CDD" id="cd01884">
    <property type="entry name" value="EF_Tu"/>
    <property type="match status" value="1"/>
</dbReference>
<dbReference type="CDD" id="cd03697">
    <property type="entry name" value="EFTU_II"/>
    <property type="match status" value="1"/>
</dbReference>
<dbReference type="CDD" id="cd03707">
    <property type="entry name" value="EFTU_III"/>
    <property type="match status" value="1"/>
</dbReference>
<dbReference type="FunFam" id="2.40.30.10:FF:000001">
    <property type="entry name" value="Elongation factor Tu"/>
    <property type="match status" value="1"/>
</dbReference>
<dbReference type="FunFam" id="2.40.30.10:FF:000046">
    <property type="entry name" value="Elongation factor Tu"/>
    <property type="match status" value="1"/>
</dbReference>
<dbReference type="FunFam" id="3.40.50.300:FF:000003">
    <property type="entry name" value="Elongation factor Tu"/>
    <property type="match status" value="1"/>
</dbReference>
<dbReference type="Gene3D" id="3.40.50.300">
    <property type="entry name" value="P-loop containing nucleotide triphosphate hydrolases"/>
    <property type="match status" value="1"/>
</dbReference>
<dbReference type="Gene3D" id="2.40.30.10">
    <property type="entry name" value="Translation factors"/>
    <property type="match status" value="2"/>
</dbReference>
<dbReference type="HAMAP" id="MF_00118_B">
    <property type="entry name" value="EF_Tu_B"/>
    <property type="match status" value="1"/>
</dbReference>
<dbReference type="InterPro" id="IPR041709">
    <property type="entry name" value="EF-Tu_GTP-bd"/>
</dbReference>
<dbReference type="InterPro" id="IPR050055">
    <property type="entry name" value="EF-Tu_GTPase"/>
</dbReference>
<dbReference type="InterPro" id="IPR004161">
    <property type="entry name" value="EFTu-like_2"/>
</dbReference>
<dbReference type="InterPro" id="IPR033720">
    <property type="entry name" value="EFTU_2"/>
</dbReference>
<dbReference type="InterPro" id="IPR031157">
    <property type="entry name" value="G_TR_CS"/>
</dbReference>
<dbReference type="InterPro" id="IPR027417">
    <property type="entry name" value="P-loop_NTPase"/>
</dbReference>
<dbReference type="InterPro" id="IPR005225">
    <property type="entry name" value="Small_GTP-bd"/>
</dbReference>
<dbReference type="InterPro" id="IPR000795">
    <property type="entry name" value="T_Tr_GTP-bd_dom"/>
</dbReference>
<dbReference type="InterPro" id="IPR009000">
    <property type="entry name" value="Transl_B-barrel_sf"/>
</dbReference>
<dbReference type="InterPro" id="IPR009001">
    <property type="entry name" value="Transl_elong_EF1A/Init_IF2_C"/>
</dbReference>
<dbReference type="InterPro" id="IPR004541">
    <property type="entry name" value="Transl_elong_EFTu/EF1A_bac/org"/>
</dbReference>
<dbReference type="InterPro" id="IPR004160">
    <property type="entry name" value="Transl_elong_EFTu/EF1A_C"/>
</dbReference>
<dbReference type="NCBIfam" id="TIGR00485">
    <property type="entry name" value="EF-Tu"/>
    <property type="match status" value="1"/>
</dbReference>
<dbReference type="NCBIfam" id="NF000766">
    <property type="entry name" value="PRK00049.1"/>
    <property type="match status" value="1"/>
</dbReference>
<dbReference type="NCBIfam" id="NF009372">
    <property type="entry name" value="PRK12735.1"/>
    <property type="match status" value="1"/>
</dbReference>
<dbReference type="NCBIfam" id="NF009373">
    <property type="entry name" value="PRK12736.1"/>
    <property type="match status" value="1"/>
</dbReference>
<dbReference type="NCBIfam" id="TIGR00231">
    <property type="entry name" value="small_GTP"/>
    <property type="match status" value="1"/>
</dbReference>
<dbReference type="PANTHER" id="PTHR43721:SF22">
    <property type="entry name" value="ELONGATION FACTOR TU, MITOCHONDRIAL"/>
    <property type="match status" value="1"/>
</dbReference>
<dbReference type="PANTHER" id="PTHR43721">
    <property type="entry name" value="ELONGATION FACTOR TU-RELATED"/>
    <property type="match status" value="1"/>
</dbReference>
<dbReference type="Pfam" id="PF00009">
    <property type="entry name" value="GTP_EFTU"/>
    <property type="match status" value="1"/>
</dbReference>
<dbReference type="Pfam" id="PF03144">
    <property type="entry name" value="GTP_EFTU_D2"/>
    <property type="match status" value="1"/>
</dbReference>
<dbReference type="Pfam" id="PF03143">
    <property type="entry name" value="GTP_EFTU_D3"/>
    <property type="match status" value="1"/>
</dbReference>
<dbReference type="PRINTS" id="PR00315">
    <property type="entry name" value="ELONGATNFCT"/>
</dbReference>
<dbReference type="SUPFAM" id="SSF50465">
    <property type="entry name" value="EF-Tu/eEF-1alpha/eIF2-gamma C-terminal domain"/>
    <property type="match status" value="1"/>
</dbReference>
<dbReference type="SUPFAM" id="SSF52540">
    <property type="entry name" value="P-loop containing nucleoside triphosphate hydrolases"/>
    <property type="match status" value="1"/>
</dbReference>
<dbReference type="SUPFAM" id="SSF50447">
    <property type="entry name" value="Translation proteins"/>
    <property type="match status" value="1"/>
</dbReference>
<dbReference type="PROSITE" id="PS00301">
    <property type="entry name" value="G_TR_1"/>
    <property type="match status" value="1"/>
</dbReference>
<dbReference type="PROSITE" id="PS51722">
    <property type="entry name" value="G_TR_2"/>
    <property type="match status" value="1"/>
</dbReference>
<protein>
    <recommendedName>
        <fullName evidence="2">Elongation factor Tu</fullName>
        <shortName evidence="2">EF-Tu</shortName>
        <ecNumber evidence="2">3.6.5.3</ecNumber>
    </recommendedName>
</protein>
<reference key="1">
    <citation type="journal article" date="1996" name="DNA Res.">
        <title>Sequence analysis of the genome of the unicellular cyanobacterium Synechocystis sp. strain PCC6803. II. Sequence determination of the entire genome and assignment of potential protein-coding regions.</title>
        <authorList>
            <person name="Kaneko T."/>
            <person name="Sato S."/>
            <person name="Kotani H."/>
            <person name="Tanaka A."/>
            <person name="Asamizu E."/>
            <person name="Nakamura Y."/>
            <person name="Miyajima N."/>
            <person name="Hirosawa M."/>
            <person name="Sugiura M."/>
            <person name="Sasamoto S."/>
            <person name="Kimura T."/>
            <person name="Hosouchi T."/>
            <person name="Matsuno A."/>
            <person name="Muraki A."/>
            <person name="Nakazaki N."/>
            <person name="Naruo K."/>
            <person name="Okumura S."/>
            <person name="Shimpo S."/>
            <person name="Takeuchi C."/>
            <person name="Wada T."/>
            <person name="Watanabe A."/>
            <person name="Yamada M."/>
            <person name="Yasuda M."/>
            <person name="Tabata S."/>
        </authorList>
    </citation>
    <scope>NUCLEOTIDE SEQUENCE [LARGE SCALE GENOMIC DNA]</scope>
    <source>
        <strain>ATCC 27184 / PCC 6803 / Kazusa</strain>
    </source>
</reference>
<evidence type="ECO:0000250" key="1"/>
<evidence type="ECO:0000255" key="2">
    <source>
        <dbReference type="HAMAP-Rule" id="MF_00118"/>
    </source>
</evidence>
<feature type="chain" id="PRO_0000091418" description="Elongation factor Tu">
    <location>
        <begin position="1"/>
        <end position="399"/>
    </location>
</feature>
<feature type="domain" description="tr-type G">
    <location>
        <begin position="10"/>
        <end position="204"/>
    </location>
</feature>
<feature type="region of interest" description="G1" evidence="1">
    <location>
        <begin position="19"/>
        <end position="26"/>
    </location>
</feature>
<feature type="region of interest" description="G2" evidence="1">
    <location>
        <begin position="60"/>
        <end position="64"/>
    </location>
</feature>
<feature type="region of interest" description="G3" evidence="1">
    <location>
        <begin position="81"/>
        <end position="84"/>
    </location>
</feature>
<feature type="region of interest" description="G4" evidence="1">
    <location>
        <begin position="136"/>
        <end position="139"/>
    </location>
</feature>
<feature type="region of interest" description="G5" evidence="1">
    <location>
        <begin position="174"/>
        <end position="176"/>
    </location>
</feature>
<feature type="binding site" evidence="2">
    <location>
        <begin position="19"/>
        <end position="26"/>
    </location>
    <ligand>
        <name>GTP</name>
        <dbReference type="ChEBI" id="CHEBI:37565"/>
    </ligand>
</feature>
<feature type="binding site" evidence="2">
    <location>
        <position position="26"/>
    </location>
    <ligand>
        <name>Mg(2+)</name>
        <dbReference type="ChEBI" id="CHEBI:18420"/>
    </ligand>
</feature>
<feature type="binding site" evidence="2">
    <location>
        <begin position="81"/>
        <end position="85"/>
    </location>
    <ligand>
        <name>GTP</name>
        <dbReference type="ChEBI" id="CHEBI:37565"/>
    </ligand>
</feature>
<feature type="binding site" evidence="2">
    <location>
        <begin position="136"/>
        <end position="139"/>
    </location>
    <ligand>
        <name>GTP</name>
        <dbReference type="ChEBI" id="CHEBI:37565"/>
    </ligand>
</feature>
<name>EFTU_SYNY3</name>